<accession>Q1RDJ9</accession>
<proteinExistence type="inferred from homology"/>
<feature type="signal peptide" evidence="2">
    <location>
        <begin position="1"/>
        <end position="26"/>
    </location>
</feature>
<feature type="chain" id="PRO_0000278554" description="Iron uptake system component EfeO">
    <location>
        <begin position="27"/>
        <end position="375"/>
    </location>
</feature>
<evidence type="ECO:0000250" key="1"/>
<evidence type="ECO:0000255" key="2"/>
<evidence type="ECO:0000305" key="3"/>
<dbReference type="EMBL" id="CP000243">
    <property type="protein sequence ID" value="ABE06565.1"/>
    <property type="molecule type" value="Genomic_DNA"/>
</dbReference>
<dbReference type="RefSeq" id="WP_000154379.1">
    <property type="nucleotide sequence ID" value="NZ_CP064825.1"/>
</dbReference>
<dbReference type="SMR" id="Q1RDJ9"/>
<dbReference type="KEGG" id="eci:UTI89_C1081"/>
<dbReference type="HOGENOM" id="CLU_050342_2_1_6"/>
<dbReference type="Proteomes" id="UP000001952">
    <property type="component" value="Chromosome"/>
</dbReference>
<dbReference type="GO" id="GO:0042597">
    <property type="term" value="C:periplasmic space"/>
    <property type="evidence" value="ECO:0007669"/>
    <property type="project" value="UniProtKB-SubCell"/>
</dbReference>
<dbReference type="CDD" id="cd14656">
    <property type="entry name" value="Imelysin-like_EfeO"/>
    <property type="match status" value="1"/>
</dbReference>
<dbReference type="FunFam" id="1.20.1420.20:FF:000001">
    <property type="entry name" value="Iron uptake system component EfeO"/>
    <property type="match status" value="1"/>
</dbReference>
<dbReference type="FunFam" id="2.60.40.420:FF:000052">
    <property type="entry name" value="Iron uptake system component EfeO"/>
    <property type="match status" value="1"/>
</dbReference>
<dbReference type="Gene3D" id="2.60.40.420">
    <property type="entry name" value="Cupredoxins - blue copper proteins"/>
    <property type="match status" value="1"/>
</dbReference>
<dbReference type="Gene3D" id="1.20.1420.20">
    <property type="entry name" value="M75 peptidase, HXXE motif"/>
    <property type="match status" value="1"/>
</dbReference>
<dbReference type="InterPro" id="IPR008972">
    <property type="entry name" value="Cupredoxin"/>
</dbReference>
<dbReference type="InterPro" id="IPR050894">
    <property type="entry name" value="EfeM/EfeO_iron_uptake"/>
</dbReference>
<dbReference type="InterPro" id="IPR028096">
    <property type="entry name" value="EfeO_Cupredoxin"/>
</dbReference>
<dbReference type="InterPro" id="IPR018976">
    <property type="entry name" value="Imelysin-like"/>
</dbReference>
<dbReference type="InterPro" id="IPR034981">
    <property type="entry name" value="Imelysin-like_EfeO/Algp7"/>
</dbReference>
<dbReference type="InterPro" id="IPR038352">
    <property type="entry name" value="Imelysin_sf"/>
</dbReference>
<dbReference type="InterPro" id="IPR053377">
    <property type="entry name" value="Iron_uptake_EfeM/EfeO"/>
</dbReference>
<dbReference type="NCBIfam" id="NF041757">
    <property type="entry name" value="EfeO"/>
    <property type="match status" value="1"/>
</dbReference>
<dbReference type="NCBIfam" id="NF007697">
    <property type="entry name" value="PRK10378.1"/>
    <property type="match status" value="1"/>
</dbReference>
<dbReference type="PANTHER" id="PTHR39192">
    <property type="entry name" value="IRON UPTAKE SYSTEM COMPONENT EFEO"/>
    <property type="match status" value="1"/>
</dbReference>
<dbReference type="PANTHER" id="PTHR39192:SF1">
    <property type="entry name" value="IRON UPTAKE SYSTEM COMPONENT EFEO"/>
    <property type="match status" value="1"/>
</dbReference>
<dbReference type="Pfam" id="PF13473">
    <property type="entry name" value="Cupredoxin_1"/>
    <property type="match status" value="1"/>
</dbReference>
<dbReference type="Pfam" id="PF09375">
    <property type="entry name" value="Peptidase_M75"/>
    <property type="match status" value="1"/>
</dbReference>
<dbReference type="SUPFAM" id="SSF49503">
    <property type="entry name" value="Cupredoxins"/>
    <property type="match status" value="1"/>
</dbReference>
<gene>
    <name type="primary">efeO</name>
    <name type="ordered locus">UTI89_C1081</name>
</gene>
<keyword id="KW-0574">Periplasm</keyword>
<keyword id="KW-0732">Signal</keyword>
<organism>
    <name type="scientific">Escherichia coli (strain UTI89 / UPEC)</name>
    <dbReference type="NCBI Taxonomy" id="364106"/>
    <lineage>
        <taxon>Bacteria</taxon>
        <taxon>Pseudomonadati</taxon>
        <taxon>Pseudomonadota</taxon>
        <taxon>Gammaproteobacteria</taxon>
        <taxon>Enterobacterales</taxon>
        <taxon>Enterobacteriaceae</taxon>
        <taxon>Escherichia</taxon>
    </lineage>
</organism>
<protein>
    <recommendedName>
        <fullName>Iron uptake system component EfeO</fullName>
    </recommendedName>
</protein>
<comment type="function">
    <text evidence="1">Involved in Fe(2+) uptake. Could be an iron-binding and/or electron-transfer component (By similarity).</text>
</comment>
<comment type="subunit">
    <text evidence="1">Monomer. Part of a ferrous iron transporter composed of EfeU, EfeO and EfeB (By similarity).</text>
</comment>
<comment type="subcellular location">
    <subcellularLocation>
        <location evidence="1">Periplasm</location>
    </subcellularLocation>
</comment>
<comment type="similarity">
    <text evidence="3">Belongs to the EfeM/EfeO family.</text>
</comment>
<name>EFEO_ECOUT</name>
<sequence length="375" mass="41151">MTINFRRNALQLSVAALFSSAFMANAADIPQVKVTVTDKQCEPMTITVNAGKTQFIIQNHSQKALEWEILKGVMVVEERENIAPGFSQKMTANLQPGEYDMTCGLLTNPKGKLIVKGEATADAAQSDALLSLGGAITAYKAYVMAETTQLVTDTKAFTDAIKAGDIEKAKALYAPTRQHYERIEPIAELFSDLDGSIDAREDDYEQKAADPKFTGFHRLEKALFGDNTTKGMDKYADQLYTDVVDLQKRISELAFPPSKVVGGAAGLIEEVAASKISGEEDRYSHTDLWDFQANVEGSQKIVDLLRPQLQKANPELLAKVDANFKKVDTILAKYRTKDGFENYDKLTDADRNALKGPITALAEDLAQLRGVLGLD</sequence>
<reference key="1">
    <citation type="journal article" date="2006" name="Proc. Natl. Acad. Sci. U.S.A.">
        <title>Identification of genes subject to positive selection in uropathogenic strains of Escherichia coli: a comparative genomics approach.</title>
        <authorList>
            <person name="Chen S.L."/>
            <person name="Hung C.-S."/>
            <person name="Xu J."/>
            <person name="Reigstad C.S."/>
            <person name="Magrini V."/>
            <person name="Sabo A."/>
            <person name="Blasiar D."/>
            <person name="Bieri T."/>
            <person name="Meyer R.R."/>
            <person name="Ozersky P."/>
            <person name="Armstrong J.R."/>
            <person name="Fulton R.S."/>
            <person name="Latreille J.P."/>
            <person name="Spieth J."/>
            <person name="Hooton T.M."/>
            <person name="Mardis E.R."/>
            <person name="Hultgren S.J."/>
            <person name="Gordon J.I."/>
        </authorList>
    </citation>
    <scope>NUCLEOTIDE SEQUENCE [LARGE SCALE GENOMIC DNA]</scope>
    <source>
        <strain>UTI89 / UPEC</strain>
    </source>
</reference>